<feature type="chain" id="PRO_1000201425" description="Elongation factor G">
    <location>
        <begin position="1"/>
        <end position="712"/>
    </location>
</feature>
<feature type="domain" description="tr-type G">
    <location>
        <begin position="8"/>
        <end position="290"/>
    </location>
</feature>
<feature type="binding site" evidence="1">
    <location>
        <begin position="17"/>
        <end position="24"/>
    </location>
    <ligand>
        <name>GTP</name>
        <dbReference type="ChEBI" id="CHEBI:37565"/>
    </ligand>
</feature>
<feature type="binding site" evidence="1">
    <location>
        <begin position="88"/>
        <end position="92"/>
    </location>
    <ligand>
        <name>GTP</name>
        <dbReference type="ChEBI" id="CHEBI:37565"/>
    </ligand>
</feature>
<feature type="binding site" evidence="1">
    <location>
        <begin position="142"/>
        <end position="145"/>
    </location>
    <ligand>
        <name>GTP</name>
        <dbReference type="ChEBI" id="CHEBI:37565"/>
    </ligand>
</feature>
<accession>B7GYM8</accession>
<organism>
    <name type="scientific">Acinetobacter baumannii (strain AB307-0294)</name>
    <dbReference type="NCBI Taxonomy" id="557600"/>
    <lineage>
        <taxon>Bacteria</taxon>
        <taxon>Pseudomonadati</taxon>
        <taxon>Pseudomonadota</taxon>
        <taxon>Gammaproteobacteria</taxon>
        <taxon>Moraxellales</taxon>
        <taxon>Moraxellaceae</taxon>
        <taxon>Acinetobacter</taxon>
        <taxon>Acinetobacter calcoaceticus/baumannii complex</taxon>
    </lineage>
</organism>
<evidence type="ECO:0000255" key="1">
    <source>
        <dbReference type="HAMAP-Rule" id="MF_00054"/>
    </source>
</evidence>
<comment type="function">
    <text evidence="1">Catalyzes the GTP-dependent ribosomal translocation step during translation elongation. During this step, the ribosome changes from the pre-translocational (PRE) to the post-translocational (POST) state as the newly formed A-site-bound peptidyl-tRNA and P-site-bound deacylated tRNA move to the P and E sites, respectively. Catalyzes the coordinated movement of the two tRNA molecules, the mRNA and conformational changes in the ribosome.</text>
</comment>
<comment type="subcellular location">
    <subcellularLocation>
        <location evidence="1">Cytoplasm</location>
    </subcellularLocation>
</comment>
<comment type="similarity">
    <text evidence="1">Belongs to the TRAFAC class translation factor GTPase superfamily. Classic translation factor GTPase family. EF-G/EF-2 subfamily.</text>
</comment>
<protein>
    <recommendedName>
        <fullName evidence="1">Elongation factor G</fullName>
        <shortName evidence="1">EF-G</shortName>
    </recommendedName>
</protein>
<name>EFG_ACIB3</name>
<dbReference type="EMBL" id="CP001172">
    <property type="protein sequence ID" value="ACJ58233.1"/>
    <property type="molecule type" value="Genomic_DNA"/>
</dbReference>
<dbReference type="RefSeq" id="WP_000113827.1">
    <property type="nucleotide sequence ID" value="NZ_CP001172.1"/>
</dbReference>
<dbReference type="SMR" id="B7GYM8"/>
<dbReference type="HOGENOM" id="CLU_002794_4_1_6"/>
<dbReference type="Proteomes" id="UP000006924">
    <property type="component" value="Chromosome"/>
</dbReference>
<dbReference type="GO" id="GO:0005737">
    <property type="term" value="C:cytoplasm"/>
    <property type="evidence" value="ECO:0007669"/>
    <property type="project" value="UniProtKB-SubCell"/>
</dbReference>
<dbReference type="GO" id="GO:0005525">
    <property type="term" value="F:GTP binding"/>
    <property type="evidence" value="ECO:0007669"/>
    <property type="project" value="UniProtKB-UniRule"/>
</dbReference>
<dbReference type="GO" id="GO:0003924">
    <property type="term" value="F:GTPase activity"/>
    <property type="evidence" value="ECO:0007669"/>
    <property type="project" value="InterPro"/>
</dbReference>
<dbReference type="GO" id="GO:0097216">
    <property type="term" value="F:guanosine tetraphosphate binding"/>
    <property type="evidence" value="ECO:0007669"/>
    <property type="project" value="UniProtKB-ARBA"/>
</dbReference>
<dbReference type="GO" id="GO:0003746">
    <property type="term" value="F:translation elongation factor activity"/>
    <property type="evidence" value="ECO:0007669"/>
    <property type="project" value="UniProtKB-UniRule"/>
</dbReference>
<dbReference type="GO" id="GO:0032790">
    <property type="term" value="P:ribosome disassembly"/>
    <property type="evidence" value="ECO:0007669"/>
    <property type="project" value="TreeGrafter"/>
</dbReference>
<dbReference type="CDD" id="cd01886">
    <property type="entry name" value="EF-G"/>
    <property type="match status" value="1"/>
</dbReference>
<dbReference type="CDD" id="cd16262">
    <property type="entry name" value="EFG_III"/>
    <property type="match status" value="1"/>
</dbReference>
<dbReference type="CDD" id="cd01434">
    <property type="entry name" value="EFG_mtEFG1_IV"/>
    <property type="match status" value="1"/>
</dbReference>
<dbReference type="CDD" id="cd03713">
    <property type="entry name" value="EFG_mtEFG_C"/>
    <property type="match status" value="1"/>
</dbReference>
<dbReference type="CDD" id="cd04088">
    <property type="entry name" value="EFG_mtEFG_II"/>
    <property type="match status" value="1"/>
</dbReference>
<dbReference type="FunFam" id="2.40.30.10:FF:000006">
    <property type="entry name" value="Elongation factor G"/>
    <property type="match status" value="1"/>
</dbReference>
<dbReference type="FunFam" id="3.30.230.10:FF:000003">
    <property type="entry name" value="Elongation factor G"/>
    <property type="match status" value="1"/>
</dbReference>
<dbReference type="FunFam" id="3.30.70.240:FF:000001">
    <property type="entry name" value="Elongation factor G"/>
    <property type="match status" value="1"/>
</dbReference>
<dbReference type="FunFam" id="3.30.70.870:FF:000001">
    <property type="entry name" value="Elongation factor G"/>
    <property type="match status" value="1"/>
</dbReference>
<dbReference type="FunFam" id="3.40.50.300:FF:000029">
    <property type="entry name" value="Elongation factor G"/>
    <property type="match status" value="1"/>
</dbReference>
<dbReference type="Gene3D" id="3.30.230.10">
    <property type="match status" value="1"/>
</dbReference>
<dbReference type="Gene3D" id="3.30.70.240">
    <property type="match status" value="1"/>
</dbReference>
<dbReference type="Gene3D" id="3.30.70.870">
    <property type="entry name" value="Elongation Factor G (Translational Gtpase), domain 3"/>
    <property type="match status" value="1"/>
</dbReference>
<dbReference type="Gene3D" id="3.40.50.300">
    <property type="entry name" value="P-loop containing nucleotide triphosphate hydrolases"/>
    <property type="match status" value="1"/>
</dbReference>
<dbReference type="Gene3D" id="2.40.30.10">
    <property type="entry name" value="Translation factors"/>
    <property type="match status" value="1"/>
</dbReference>
<dbReference type="HAMAP" id="MF_00054_B">
    <property type="entry name" value="EF_G_EF_2_B"/>
    <property type="match status" value="1"/>
</dbReference>
<dbReference type="InterPro" id="IPR041095">
    <property type="entry name" value="EFG_II"/>
</dbReference>
<dbReference type="InterPro" id="IPR009022">
    <property type="entry name" value="EFG_III"/>
</dbReference>
<dbReference type="InterPro" id="IPR035647">
    <property type="entry name" value="EFG_III/V"/>
</dbReference>
<dbReference type="InterPro" id="IPR047872">
    <property type="entry name" value="EFG_IV"/>
</dbReference>
<dbReference type="InterPro" id="IPR035649">
    <property type="entry name" value="EFG_V"/>
</dbReference>
<dbReference type="InterPro" id="IPR000640">
    <property type="entry name" value="EFG_V-like"/>
</dbReference>
<dbReference type="InterPro" id="IPR004161">
    <property type="entry name" value="EFTu-like_2"/>
</dbReference>
<dbReference type="InterPro" id="IPR031157">
    <property type="entry name" value="G_TR_CS"/>
</dbReference>
<dbReference type="InterPro" id="IPR027417">
    <property type="entry name" value="P-loop_NTPase"/>
</dbReference>
<dbReference type="InterPro" id="IPR020568">
    <property type="entry name" value="Ribosomal_Su5_D2-typ_SF"/>
</dbReference>
<dbReference type="InterPro" id="IPR014721">
    <property type="entry name" value="Ribsml_uS5_D2-typ_fold_subgr"/>
</dbReference>
<dbReference type="InterPro" id="IPR005225">
    <property type="entry name" value="Small_GTP-bd"/>
</dbReference>
<dbReference type="InterPro" id="IPR000795">
    <property type="entry name" value="T_Tr_GTP-bd_dom"/>
</dbReference>
<dbReference type="InterPro" id="IPR009000">
    <property type="entry name" value="Transl_B-barrel_sf"/>
</dbReference>
<dbReference type="InterPro" id="IPR004540">
    <property type="entry name" value="Transl_elong_EFG/EF2"/>
</dbReference>
<dbReference type="InterPro" id="IPR005517">
    <property type="entry name" value="Transl_elong_EFG/EF2_IV"/>
</dbReference>
<dbReference type="NCBIfam" id="TIGR00484">
    <property type="entry name" value="EF-G"/>
    <property type="match status" value="1"/>
</dbReference>
<dbReference type="NCBIfam" id="NF009381">
    <property type="entry name" value="PRK12740.1-5"/>
    <property type="match status" value="1"/>
</dbReference>
<dbReference type="NCBIfam" id="TIGR00231">
    <property type="entry name" value="small_GTP"/>
    <property type="match status" value="1"/>
</dbReference>
<dbReference type="PANTHER" id="PTHR43261:SF1">
    <property type="entry name" value="RIBOSOME-RELEASING FACTOR 2, MITOCHONDRIAL"/>
    <property type="match status" value="1"/>
</dbReference>
<dbReference type="PANTHER" id="PTHR43261">
    <property type="entry name" value="TRANSLATION ELONGATION FACTOR G-RELATED"/>
    <property type="match status" value="1"/>
</dbReference>
<dbReference type="Pfam" id="PF00679">
    <property type="entry name" value="EFG_C"/>
    <property type="match status" value="1"/>
</dbReference>
<dbReference type="Pfam" id="PF14492">
    <property type="entry name" value="EFG_III"/>
    <property type="match status" value="1"/>
</dbReference>
<dbReference type="Pfam" id="PF03764">
    <property type="entry name" value="EFG_IV"/>
    <property type="match status" value="1"/>
</dbReference>
<dbReference type="Pfam" id="PF00009">
    <property type="entry name" value="GTP_EFTU"/>
    <property type="match status" value="1"/>
</dbReference>
<dbReference type="Pfam" id="PF03144">
    <property type="entry name" value="GTP_EFTU_D2"/>
    <property type="match status" value="1"/>
</dbReference>
<dbReference type="PRINTS" id="PR00315">
    <property type="entry name" value="ELONGATNFCT"/>
</dbReference>
<dbReference type="SMART" id="SM00838">
    <property type="entry name" value="EFG_C"/>
    <property type="match status" value="1"/>
</dbReference>
<dbReference type="SMART" id="SM00889">
    <property type="entry name" value="EFG_IV"/>
    <property type="match status" value="1"/>
</dbReference>
<dbReference type="SUPFAM" id="SSF54980">
    <property type="entry name" value="EF-G C-terminal domain-like"/>
    <property type="match status" value="2"/>
</dbReference>
<dbReference type="SUPFAM" id="SSF52540">
    <property type="entry name" value="P-loop containing nucleoside triphosphate hydrolases"/>
    <property type="match status" value="1"/>
</dbReference>
<dbReference type="SUPFAM" id="SSF54211">
    <property type="entry name" value="Ribosomal protein S5 domain 2-like"/>
    <property type="match status" value="1"/>
</dbReference>
<dbReference type="SUPFAM" id="SSF50447">
    <property type="entry name" value="Translation proteins"/>
    <property type="match status" value="1"/>
</dbReference>
<dbReference type="PROSITE" id="PS00301">
    <property type="entry name" value="G_TR_1"/>
    <property type="match status" value="1"/>
</dbReference>
<dbReference type="PROSITE" id="PS51722">
    <property type="entry name" value="G_TR_2"/>
    <property type="match status" value="1"/>
</dbReference>
<proteinExistence type="inferred from homology"/>
<keyword id="KW-0963">Cytoplasm</keyword>
<keyword id="KW-0251">Elongation factor</keyword>
<keyword id="KW-0342">GTP-binding</keyword>
<keyword id="KW-0547">Nucleotide-binding</keyword>
<keyword id="KW-0648">Protein biosynthesis</keyword>
<gene>
    <name evidence="1" type="primary">fusA</name>
    <name type="ordered locus">ABBFA_002747</name>
</gene>
<sequence>MARQTPITRYRNIGISAHIDAGKTTTTERILFYTGVSHKIGEVHDGAATMDWMEQEQERGITITSAATTCFWSGMGNQFPQHRINVIDTPGHVDFTIEVERSMRVLDGACMVYCAVGGVQPQSETVWRQANKYKVPRLAFVNKMDRTGANFFRVVEQMKTRLGANPVPIVVPIGAEDTFTGVVDLIEMKAIIWDEASQGMKFEYGEIPADLVDTAQEWRTNMVEAAAEASEELMDKYLEEGDLSKEDIIAGLRARTLASEIQVMLCGSAFKNKGVQRMLDAVIEFLPSPTEVKAIEGILDDKDETKASREASDEAPFSALAFKIMNDKFVGNLTFVRVYSGVLKQGDAVYNPVKSKRERIGRIVQMHANERQDIDEIRAGDIAACVGLKDVTTGDTLCDEKNIITLERMEFPDPVIQLAVEPKTKADQEKMSIALGRLAKEDPSFRVHTDEESGQTIIAGMGELHLDIIVDRMKREFGVEANIGKPMVAYRETIKKTVEQEGKLVRQTGGKGKFGHVYVRLEPLDVEAAGKEYEFAEEVVGGVVPKEFFGAVDKGIQERMKNGVLAGYPVVGVKAVLFDGSYHDVDSDELSFKMAGSYAFRDGFMKADPVLLEPIMKVEVETPEDYMGDIMGDLNRRRGMVQGMDDLPGGTKAIKAEVPLAEMFGYATQMRSMSQGRATYSMEFAKYAETPRNVAEGIIAKFQAGGKKGDDE</sequence>
<reference key="1">
    <citation type="journal article" date="2008" name="J. Bacteriol.">
        <title>Comparative genome sequence analysis of multidrug-resistant Acinetobacter baumannii.</title>
        <authorList>
            <person name="Adams M.D."/>
            <person name="Goglin K."/>
            <person name="Molyneaux N."/>
            <person name="Hujer K.M."/>
            <person name="Lavender H."/>
            <person name="Jamison J.J."/>
            <person name="MacDonald I.J."/>
            <person name="Martin K.M."/>
            <person name="Russo T."/>
            <person name="Campagnari A.A."/>
            <person name="Hujer A.M."/>
            <person name="Bonomo R.A."/>
            <person name="Gill S.R."/>
        </authorList>
    </citation>
    <scope>NUCLEOTIDE SEQUENCE [LARGE SCALE GENOMIC DNA]</scope>
    <source>
        <strain>AB307-0294</strain>
    </source>
</reference>